<name>Y048_MYCTO</name>
<protein>
    <recommendedName>
        <fullName>Uncharacterized protein MT0054</fullName>
    </recommendedName>
</protein>
<comment type="subcellular location">
    <subcellularLocation>
        <location evidence="2">Cell membrane</location>
        <topology evidence="2">Multi-pass membrane protein</topology>
    </subcellularLocation>
</comment>
<reference key="1">
    <citation type="journal article" date="2002" name="J. Bacteriol.">
        <title>Whole-genome comparison of Mycobacterium tuberculosis clinical and laboratory strains.</title>
        <authorList>
            <person name="Fleischmann R.D."/>
            <person name="Alland D."/>
            <person name="Eisen J.A."/>
            <person name="Carpenter L."/>
            <person name="White O."/>
            <person name="Peterson J.D."/>
            <person name="DeBoy R.T."/>
            <person name="Dodson R.J."/>
            <person name="Gwinn M.L."/>
            <person name="Haft D.H."/>
            <person name="Hickey E.K."/>
            <person name="Kolonay J.F."/>
            <person name="Nelson W.C."/>
            <person name="Umayam L.A."/>
            <person name="Ermolaeva M.D."/>
            <person name="Salzberg S.L."/>
            <person name="Delcher A."/>
            <person name="Utterback T.R."/>
            <person name="Weidman J.F."/>
            <person name="Khouri H.M."/>
            <person name="Gill J."/>
            <person name="Mikula A."/>
            <person name="Bishai W."/>
            <person name="Jacobs W.R. Jr."/>
            <person name="Venter J.C."/>
            <person name="Fraser C.M."/>
        </authorList>
    </citation>
    <scope>NUCLEOTIDE SEQUENCE [LARGE SCALE GENOMIC DNA]</scope>
    <source>
        <strain>CDC 1551 / Oshkosh</strain>
    </source>
</reference>
<sequence>MAKWLGAPLARGVSTATRAKDSDRQDACRILDDALRDGELSMEEHRERVSAATKAVTLGDLQRLVADLQVESAPAQMPALKSRAKRTELGLLAAAFVASVLLGVGIGWGVYGNTRSPLDFTSDPGAKPDGIAPVVLTPPRQLHSLGGLTGLLEQTRKRFGDTMGYRLVIYPEYASLDRVDPADDRRVLAYTYRGGWGDATSSAKSIADVSVVDLSKFDAKTAVGIMRGAPETLGLKQSDVKSMYLIVDPAKDPTTPAALSLSLYVSSDYGGGYLVFAGDGTIKHVSYPS</sequence>
<dbReference type="EMBL" id="AE000516">
    <property type="protein sequence ID" value="AAK44276.1"/>
    <property type="molecule type" value="Genomic_DNA"/>
</dbReference>
<dbReference type="PIR" id="H70912">
    <property type="entry name" value="H70912"/>
</dbReference>
<dbReference type="RefSeq" id="WP_003900795.1">
    <property type="nucleotide sequence ID" value="NZ_KK341227.1"/>
</dbReference>
<dbReference type="KEGG" id="mtc:MT0054"/>
<dbReference type="PATRIC" id="fig|83331.31.peg.54"/>
<dbReference type="HOGENOM" id="CLU_064933_1_0_11"/>
<dbReference type="Proteomes" id="UP000001020">
    <property type="component" value="Chromosome"/>
</dbReference>
<dbReference type="GO" id="GO:0005886">
    <property type="term" value="C:plasma membrane"/>
    <property type="evidence" value="ECO:0007669"/>
    <property type="project" value="UniProtKB-SubCell"/>
</dbReference>
<dbReference type="InterPro" id="IPR012551">
    <property type="entry name" value="DUF1707_SHOCT-like"/>
</dbReference>
<dbReference type="PANTHER" id="PTHR40763:SF4">
    <property type="entry name" value="DUF1707 DOMAIN-CONTAINING PROTEIN"/>
    <property type="match status" value="1"/>
</dbReference>
<dbReference type="PANTHER" id="PTHR40763">
    <property type="entry name" value="MEMBRANE PROTEIN-RELATED"/>
    <property type="match status" value="1"/>
</dbReference>
<dbReference type="Pfam" id="PF08044">
    <property type="entry name" value="DUF1707"/>
    <property type="match status" value="1"/>
</dbReference>
<feature type="signal peptide" evidence="1">
    <location>
        <begin position="1"/>
        <end position="19"/>
    </location>
</feature>
<feature type="chain" id="PRO_0000427347" description="Uncharacterized protein MT0054">
    <location>
        <begin position="20"/>
        <end position="289"/>
    </location>
</feature>
<feature type="transmembrane region" description="Helical" evidence="1">
    <location>
        <begin position="90"/>
        <end position="110"/>
    </location>
</feature>
<feature type="transmembrane region" description="Helical" evidence="1">
    <location>
        <begin position="257"/>
        <end position="277"/>
    </location>
</feature>
<proteinExistence type="inferred from homology"/>
<accession>P9WM86</accession>
<accession>L0T2E7</accession>
<accession>P71705</accession>
<organism>
    <name type="scientific">Mycobacterium tuberculosis (strain CDC 1551 / Oshkosh)</name>
    <dbReference type="NCBI Taxonomy" id="83331"/>
    <lineage>
        <taxon>Bacteria</taxon>
        <taxon>Bacillati</taxon>
        <taxon>Actinomycetota</taxon>
        <taxon>Actinomycetes</taxon>
        <taxon>Mycobacteriales</taxon>
        <taxon>Mycobacteriaceae</taxon>
        <taxon>Mycobacterium</taxon>
        <taxon>Mycobacterium tuberculosis complex</taxon>
    </lineage>
</organism>
<evidence type="ECO:0000255" key="1"/>
<evidence type="ECO:0000305" key="2"/>
<keyword id="KW-1003">Cell membrane</keyword>
<keyword id="KW-0472">Membrane</keyword>
<keyword id="KW-1185">Reference proteome</keyword>
<keyword id="KW-0732">Signal</keyword>
<keyword id="KW-0812">Transmembrane</keyword>
<keyword id="KW-1133">Transmembrane helix</keyword>
<gene>
    <name type="ordered locus">MT0054</name>
</gene>